<comment type="function">
    <text evidence="1">NDH-1 shuttles electrons from NADH, via FMN and iron-sulfur (Fe-S) centers, to quinones in the respiratory chain. The immediate electron acceptor for the enzyme in this species is believed to be ubiquinone. Couples the redox reaction to proton translocation (for every two electrons transferred, four hydrogen ions are translocated across the cytoplasmic membrane), and thus conserves the redox energy in a proton gradient.</text>
</comment>
<comment type="catalytic activity">
    <reaction evidence="1">
        <text>a quinone + NADH + 5 H(+)(in) = a quinol + NAD(+) + 4 H(+)(out)</text>
        <dbReference type="Rhea" id="RHEA:57888"/>
        <dbReference type="ChEBI" id="CHEBI:15378"/>
        <dbReference type="ChEBI" id="CHEBI:24646"/>
        <dbReference type="ChEBI" id="CHEBI:57540"/>
        <dbReference type="ChEBI" id="CHEBI:57945"/>
        <dbReference type="ChEBI" id="CHEBI:132124"/>
    </reaction>
</comment>
<comment type="subunit">
    <text evidence="1">NDH-1 is composed of 13 different subunits. Subunits NuoB, CD, E, F, and G constitute the peripheral sector of the complex.</text>
</comment>
<comment type="subcellular location">
    <subcellularLocation>
        <location evidence="1">Cell inner membrane</location>
        <topology evidence="1">Peripheral membrane protein</topology>
        <orientation evidence="1">Cytoplasmic side</orientation>
    </subcellularLocation>
</comment>
<comment type="similarity">
    <text evidence="1">In the N-terminal section; belongs to the complex I 30 kDa subunit family.</text>
</comment>
<comment type="similarity">
    <text evidence="1">In the C-terminal section; belongs to the complex I 49 kDa subunit family.</text>
</comment>
<comment type="sequence caution" evidence="2">
    <conflict type="erroneous initiation">
        <sequence resource="EMBL-CDS" id="ACF67332"/>
    </conflict>
</comment>
<reference key="1">
    <citation type="journal article" date="2011" name="J. Bacteriol.">
        <title>Comparative genomics of 28 Salmonella enterica isolates: evidence for CRISPR-mediated adaptive sublineage evolution.</title>
        <authorList>
            <person name="Fricke W.F."/>
            <person name="Mammel M.K."/>
            <person name="McDermott P.F."/>
            <person name="Tartera C."/>
            <person name="White D.G."/>
            <person name="Leclerc J.E."/>
            <person name="Ravel J."/>
            <person name="Cebula T.A."/>
        </authorList>
    </citation>
    <scope>NUCLEOTIDE SEQUENCE [LARGE SCALE GENOMIC DNA]</scope>
    <source>
        <strain>SL476</strain>
    </source>
</reference>
<gene>
    <name evidence="1" type="primary">nuoC</name>
    <name evidence="1" type="synonym">nuoCD</name>
    <name evidence="1" type="synonym">nuoD</name>
    <name type="ordered locus">SeHA_C2565</name>
</gene>
<dbReference type="EC" id="7.1.1.-" evidence="1"/>
<dbReference type="EMBL" id="CP001120">
    <property type="protein sequence ID" value="ACF67332.1"/>
    <property type="status" value="ALT_INIT"/>
    <property type="molecule type" value="Genomic_DNA"/>
</dbReference>
<dbReference type="SMR" id="B4TBJ2"/>
<dbReference type="KEGG" id="seh:SeHA_C2565"/>
<dbReference type="HOGENOM" id="CLU_015134_3_2_6"/>
<dbReference type="Proteomes" id="UP000001866">
    <property type="component" value="Chromosome"/>
</dbReference>
<dbReference type="GO" id="GO:0030964">
    <property type="term" value="C:NADH dehydrogenase complex"/>
    <property type="evidence" value="ECO:0007669"/>
    <property type="project" value="InterPro"/>
</dbReference>
<dbReference type="GO" id="GO:0005886">
    <property type="term" value="C:plasma membrane"/>
    <property type="evidence" value="ECO:0007669"/>
    <property type="project" value="UniProtKB-SubCell"/>
</dbReference>
<dbReference type="GO" id="GO:0051287">
    <property type="term" value="F:NAD binding"/>
    <property type="evidence" value="ECO:0007669"/>
    <property type="project" value="InterPro"/>
</dbReference>
<dbReference type="GO" id="GO:0008137">
    <property type="term" value="F:NADH dehydrogenase (ubiquinone) activity"/>
    <property type="evidence" value="ECO:0007669"/>
    <property type="project" value="InterPro"/>
</dbReference>
<dbReference type="GO" id="GO:0050136">
    <property type="term" value="F:NADH:ubiquinone reductase (non-electrogenic) activity"/>
    <property type="evidence" value="ECO:0007669"/>
    <property type="project" value="UniProtKB-UniRule"/>
</dbReference>
<dbReference type="GO" id="GO:0048038">
    <property type="term" value="F:quinone binding"/>
    <property type="evidence" value="ECO:0007669"/>
    <property type="project" value="UniProtKB-KW"/>
</dbReference>
<dbReference type="FunFam" id="1.10.645.10:FF:000001">
    <property type="entry name" value="NADH-quinone oxidoreductase subunit C/D"/>
    <property type="match status" value="1"/>
</dbReference>
<dbReference type="FunFam" id="3.30.460.80:FF:000001">
    <property type="entry name" value="NADH-quinone oxidoreductase subunit C/D"/>
    <property type="match status" value="1"/>
</dbReference>
<dbReference type="Gene3D" id="1.10.645.10">
    <property type="entry name" value="Cytochrome-c3 Hydrogenase, chain B"/>
    <property type="match status" value="1"/>
</dbReference>
<dbReference type="Gene3D" id="3.30.460.80">
    <property type="entry name" value="NADH:ubiquinone oxidoreductase, 30kDa subunit"/>
    <property type="match status" value="1"/>
</dbReference>
<dbReference type="HAMAP" id="MF_01359">
    <property type="entry name" value="NDH1_NuoCD_1"/>
    <property type="match status" value="1"/>
</dbReference>
<dbReference type="HAMAP" id="MF_01358">
    <property type="entry name" value="NDH1_NuoD"/>
    <property type="match status" value="1"/>
</dbReference>
<dbReference type="InterPro" id="IPR010218">
    <property type="entry name" value="NADH_DH_suC"/>
</dbReference>
<dbReference type="InterPro" id="IPR023062">
    <property type="entry name" value="NADH_DH_suCD"/>
</dbReference>
<dbReference type="InterPro" id="IPR001135">
    <property type="entry name" value="NADH_Q_OxRdtase_suD"/>
</dbReference>
<dbReference type="InterPro" id="IPR037232">
    <property type="entry name" value="NADH_quin_OxRdtase_su_C/D-like"/>
</dbReference>
<dbReference type="InterPro" id="IPR001268">
    <property type="entry name" value="NADH_UbQ_OxRdtase_30kDa_su"/>
</dbReference>
<dbReference type="InterPro" id="IPR014029">
    <property type="entry name" value="NADH_UbQ_OxRdtase_49kDa_CS"/>
</dbReference>
<dbReference type="InterPro" id="IPR022885">
    <property type="entry name" value="NDH1_su_D/H"/>
</dbReference>
<dbReference type="InterPro" id="IPR029014">
    <property type="entry name" value="NiFe-Hase_large"/>
</dbReference>
<dbReference type="NCBIfam" id="TIGR01961">
    <property type="entry name" value="NuoC_fam"/>
    <property type="match status" value="1"/>
</dbReference>
<dbReference type="NCBIfam" id="TIGR01962">
    <property type="entry name" value="NuoD"/>
    <property type="match status" value="1"/>
</dbReference>
<dbReference type="NCBIfam" id="NF004739">
    <property type="entry name" value="PRK06075.1"/>
    <property type="match status" value="1"/>
</dbReference>
<dbReference type="NCBIfam" id="NF008728">
    <property type="entry name" value="PRK11742.1"/>
    <property type="match status" value="1"/>
</dbReference>
<dbReference type="PANTHER" id="PTHR11993:SF45">
    <property type="entry name" value="NADH-QUINONE OXIDOREDUCTASE SUBUNIT C_D"/>
    <property type="match status" value="1"/>
</dbReference>
<dbReference type="PANTHER" id="PTHR11993">
    <property type="entry name" value="NADH-UBIQUINONE OXIDOREDUCTASE 49 KDA SUBUNIT"/>
    <property type="match status" value="1"/>
</dbReference>
<dbReference type="Pfam" id="PF00329">
    <property type="entry name" value="Complex1_30kDa"/>
    <property type="match status" value="1"/>
</dbReference>
<dbReference type="Pfam" id="PF00346">
    <property type="entry name" value="Complex1_49kDa"/>
    <property type="match status" value="1"/>
</dbReference>
<dbReference type="SUPFAM" id="SSF56762">
    <property type="entry name" value="HydB/Nqo4-like"/>
    <property type="match status" value="1"/>
</dbReference>
<dbReference type="SUPFAM" id="SSF143243">
    <property type="entry name" value="Nqo5-like"/>
    <property type="match status" value="1"/>
</dbReference>
<dbReference type="PROSITE" id="PS00535">
    <property type="entry name" value="COMPLEX1_49K"/>
    <property type="match status" value="1"/>
</dbReference>
<feature type="chain" id="PRO_0000358686" description="NADH-quinone oxidoreductase subunit C/D">
    <location>
        <begin position="1"/>
        <end position="596"/>
    </location>
</feature>
<feature type="region of interest" description="NADH dehydrogenase I subunit C" evidence="1">
    <location>
        <begin position="1"/>
        <end position="186"/>
    </location>
</feature>
<feature type="region of interest" description="NADH dehydrogenase I subunit D" evidence="1">
    <location>
        <begin position="210"/>
        <end position="596"/>
    </location>
</feature>
<protein>
    <recommendedName>
        <fullName evidence="1">NADH-quinone oxidoreductase subunit C/D</fullName>
        <ecNumber evidence="1">7.1.1.-</ecNumber>
    </recommendedName>
    <alternativeName>
        <fullName evidence="1">NADH dehydrogenase I subunit C/D</fullName>
    </alternativeName>
    <alternativeName>
        <fullName evidence="1">NDH-1 subunit C/D</fullName>
    </alternativeName>
</protein>
<name>NUOCD_SALHS</name>
<accession>B4TBJ2</accession>
<evidence type="ECO:0000255" key="1">
    <source>
        <dbReference type="HAMAP-Rule" id="MF_01359"/>
    </source>
</evidence>
<evidence type="ECO:0000305" key="2"/>
<keyword id="KW-0997">Cell inner membrane</keyword>
<keyword id="KW-1003">Cell membrane</keyword>
<keyword id="KW-0472">Membrane</keyword>
<keyword id="KW-0511">Multifunctional enzyme</keyword>
<keyword id="KW-0520">NAD</keyword>
<keyword id="KW-0874">Quinone</keyword>
<keyword id="KW-1278">Translocase</keyword>
<keyword id="KW-0813">Transport</keyword>
<keyword id="KW-0830">Ubiquinone</keyword>
<organism>
    <name type="scientific">Salmonella heidelberg (strain SL476)</name>
    <dbReference type="NCBI Taxonomy" id="454169"/>
    <lineage>
        <taxon>Bacteria</taxon>
        <taxon>Pseudomonadati</taxon>
        <taxon>Pseudomonadota</taxon>
        <taxon>Gammaproteobacteria</taxon>
        <taxon>Enterobacterales</taxon>
        <taxon>Enterobacteriaceae</taxon>
        <taxon>Salmonella</taxon>
    </lineage>
</organism>
<proteinExistence type="inferred from homology"/>
<sequence length="596" mass="68402">MTDLTAQDAAWSTRDHLDDPVIGELRNRFGPDAFTVQATRTGIPVVWVKREQLLEVGDFLKKLPKPYVMLFDLHGMDERLRTHRDGLPAADFSVFYHLISIERNRDIMLKVALSENDLRVPTFTKLFPNANWYERETWEMFGIDIEGHPHLTRIMMPQTWEGHPLRKDYPARATEFDPFELTKAKQDLEMEALTFKPEDWGMKRGTDNEDFMFLNLGPNHPSAHGAFRIILQLDGEEIVDCVPDIGYHHRGAEKMGERQSWHSYIPYTDRIEYLGGCVNEMPYVLAVEKLAGITVPDRVNVIRVMLSELFRINSHLLYISTFIQDVGAMTPVFFAFTDRQKIYDLVEAITGFRMHPAWFRIGGVAHDLPRGWDRLLREFLEWMPKRLDSYEKAALRNTILKGRSQGVAAYGAKEALEWGTTGAGLRATGIDFDVRKWRPYSGYENFDFEVPVGGGVSDCYTRVMLKVEELRQSLRILQQCLDNMPEGPFKADHPLTTPPPKERTLQHIETLITHFLQVSWGPVMPAQESFQMVEATKGINSYYLTSDGSTMSYRTRVRTPSFAHLQQIPSAIRGSLVSDLIVYLGSIDFVMSDVDR</sequence>